<proteinExistence type="inferred from homology"/>
<accession>B9GFG6</accession>
<keyword id="KW-1003">Cell membrane</keyword>
<keyword id="KW-0472">Membrane</keyword>
<keyword id="KW-1185">Reference proteome</keyword>
<keyword id="KW-0812">Transmembrane</keyword>
<keyword id="KW-1133">Transmembrane helix</keyword>
<organism>
    <name type="scientific">Populus trichocarpa</name>
    <name type="common">Western balsam poplar</name>
    <name type="synonym">Populus balsamifera subsp. trichocarpa</name>
    <dbReference type="NCBI Taxonomy" id="3694"/>
    <lineage>
        <taxon>Eukaryota</taxon>
        <taxon>Viridiplantae</taxon>
        <taxon>Streptophyta</taxon>
        <taxon>Embryophyta</taxon>
        <taxon>Tracheophyta</taxon>
        <taxon>Spermatophyta</taxon>
        <taxon>Magnoliopsida</taxon>
        <taxon>eudicotyledons</taxon>
        <taxon>Gunneridae</taxon>
        <taxon>Pentapetalae</taxon>
        <taxon>rosids</taxon>
        <taxon>fabids</taxon>
        <taxon>Malpighiales</taxon>
        <taxon>Salicaceae</taxon>
        <taxon>Saliceae</taxon>
        <taxon>Populus</taxon>
    </lineage>
</organism>
<reference key="1">
    <citation type="journal article" date="2006" name="Science">
        <title>The genome of black cottonwood, Populus trichocarpa (Torr. &amp; Gray).</title>
        <authorList>
            <person name="Tuskan G.A."/>
            <person name="Difazio S."/>
            <person name="Jansson S."/>
            <person name="Bohlmann J."/>
            <person name="Grigoriev I."/>
            <person name="Hellsten U."/>
            <person name="Putnam N."/>
            <person name="Ralph S."/>
            <person name="Rombauts S."/>
            <person name="Salamov A."/>
            <person name="Schein J."/>
            <person name="Sterck L."/>
            <person name="Aerts A."/>
            <person name="Bhalerao R.R."/>
            <person name="Bhalerao R.P."/>
            <person name="Blaudez D."/>
            <person name="Boerjan W."/>
            <person name="Brun A."/>
            <person name="Brunner A."/>
            <person name="Busov V."/>
            <person name="Campbell M."/>
            <person name="Carlson J."/>
            <person name="Chalot M."/>
            <person name="Chapman J."/>
            <person name="Chen G.-L."/>
            <person name="Cooper D."/>
            <person name="Coutinho P.M."/>
            <person name="Couturier J."/>
            <person name="Covert S."/>
            <person name="Cronk Q."/>
            <person name="Cunningham R."/>
            <person name="Davis J."/>
            <person name="Degroeve S."/>
            <person name="Dejardin A."/>
            <person name="dePamphilis C.W."/>
            <person name="Detter J."/>
            <person name="Dirks B."/>
            <person name="Dubchak I."/>
            <person name="Duplessis S."/>
            <person name="Ehlting J."/>
            <person name="Ellis B."/>
            <person name="Gendler K."/>
            <person name="Goodstein D."/>
            <person name="Gribskov M."/>
            <person name="Grimwood J."/>
            <person name="Groover A."/>
            <person name="Gunter L."/>
            <person name="Hamberger B."/>
            <person name="Heinze B."/>
            <person name="Helariutta Y."/>
            <person name="Henrissat B."/>
            <person name="Holligan D."/>
            <person name="Holt R."/>
            <person name="Huang W."/>
            <person name="Islam-Faridi N."/>
            <person name="Jones S."/>
            <person name="Jones-Rhoades M."/>
            <person name="Jorgensen R."/>
            <person name="Joshi C."/>
            <person name="Kangasjaervi J."/>
            <person name="Karlsson J."/>
            <person name="Kelleher C."/>
            <person name="Kirkpatrick R."/>
            <person name="Kirst M."/>
            <person name="Kohler A."/>
            <person name="Kalluri U."/>
            <person name="Larimer F."/>
            <person name="Leebens-Mack J."/>
            <person name="Leple J.-C."/>
            <person name="Locascio P."/>
            <person name="Lou Y."/>
            <person name="Lucas S."/>
            <person name="Martin F."/>
            <person name="Montanini B."/>
            <person name="Napoli C."/>
            <person name="Nelson D.R."/>
            <person name="Nelson C."/>
            <person name="Nieminen K."/>
            <person name="Nilsson O."/>
            <person name="Pereda V."/>
            <person name="Peter G."/>
            <person name="Philippe R."/>
            <person name="Pilate G."/>
            <person name="Poliakov A."/>
            <person name="Razumovskaya J."/>
            <person name="Richardson P."/>
            <person name="Rinaldi C."/>
            <person name="Ritland K."/>
            <person name="Rouze P."/>
            <person name="Ryaboy D."/>
            <person name="Schmutz J."/>
            <person name="Schrader J."/>
            <person name="Segerman B."/>
            <person name="Shin H."/>
            <person name="Siddiqui A."/>
            <person name="Sterky F."/>
            <person name="Terry A."/>
            <person name="Tsai C.-J."/>
            <person name="Uberbacher E."/>
            <person name="Unneberg P."/>
            <person name="Vahala J."/>
            <person name="Wall K."/>
            <person name="Wessler S."/>
            <person name="Yang G."/>
            <person name="Yin T."/>
            <person name="Douglas C."/>
            <person name="Marra M."/>
            <person name="Sandberg G."/>
            <person name="Van de Peer Y."/>
            <person name="Rokhsar D.S."/>
        </authorList>
    </citation>
    <scope>NUCLEOTIDE SEQUENCE [LARGE SCALE GENOMIC DNA]</scope>
    <source>
        <strain>cv. Nisqually</strain>
    </source>
</reference>
<reference key="2">
    <citation type="submission" date="2008-12" db="EMBL/GenBank/DDBJ databases">
        <authorList>
            <consortium name="US DOE Joint Genome Institute (JGI-PGF)"/>
            <person name="Grigoriev I.V."/>
            <person name="Terry A."/>
            <person name="Salamov A.A."/>
            <person name="Otillar R."/>
            <person name="Lou Y."/>
            <person name="Lucas S."/>
            <person name="Hammon N."/>
            <person name="Glavina del Rio T."/>
            <person name="Detter J."/>
            <person name="Kalin E."/>
            <person name="Tice H."/>
            <person name="Pitluck S."/>
            <person name="Chapman J."/>
            <person name="Putnam N.H."/>
            <person name="Brunner A."/>
            <person name="Busov V."/>
            <person name="Campbell M."/>
            <person name="Chalot M."/>
            <person name="Covert S."/>
            <person name="Davis J."/>
            <person name="DiFazio S."/>
            <person name="Gribskov M."/>
            <person name="Gunter L."/>
            <person name="Hamberger B."/>
            <person name="Jansson S."/>
            <person name="Joshi C."/>
            <person name="Larimer F."/>
            <person name="Martin F."/>
            <person name="Napoli C."/>
            <person name="Nelson D."/>
            <person name="Ralph S."/>
            <person name="Rombauts S."/>
            <person name="Rouze P."/>
            <person name="Schrader J."/>
            <person name="Tsai C."/>
            <person name="Vahala J."/>
            <person name="Tuskan G."/>
            <person name="Rokhsar D."/>
        </authorList>
    </citation>
    <scope>GENOME REANNOTATION</scope>
    <source>
        <strain>cv. Nisqually</strain>
    </source>
</reference>
<reference key="3">
    <citation type="journal article" date="2014" name="Plant Physiol.">
        <title>Functional and evolutionary analysis of the CASPARIAN STRIP MEMBRANE DOMAIN PROTEIN family.</title>
        <authorList>
            <person name="Roppolo D."/>
            <person name="Boeckmann B."/>
            <person name="Pfister A."/>
            <person name="Boutet E."/>
            <person name="Rubio M.C."/>
            <person name="Denervaud-Tendon V."/>
            <person name="Vermeer J.E."/>
            <person name="Gheyselinck J."/>
            <person name="Xenarios I."/>
            <person name="Geldner N."/>
        </authorList>
    </citation>
    <scope>GENE FAMILY</scope>
    <scope>NOMENCLATURE</scope>
</reference>
<dbReference type="EMBL" id="CM009290">
    <property type="protein sequence ID" value="EEE83466.1"/>
    <property type="molecule type" value="Genomic_DNA"/>
</dbReference>
<dbReference type="RefSeq" id="XP_002298661.1">
    <property type="nucleotide sequence ID" value="XM_002298625.2"/>
</dbReference>
<dbReference type="SMR" id="B9GFG6"/>
<dbReference type="STRING" id="3694.B9GFG6"/>
<dbReference type="KEGG" id="pop:7461629"/>
<dbReference type="eggNOG" id="ENOG502S695">
    <property type="taxonomic scope" value="Eukaryota"/>
</dbReference>
<dbReference type="HOGENOM" id="CLU_066104_3_0_1"/>
<dbReference type="InParanoid" id="B9GFG6"/>
<dbReference type="OrthoDB" id="992805at2759"/>
<dbReference type="Proteomes" id="UP000006729">
    <property type="component" value="Chromosome 1"/>
</dbReference>
<dbReference type="ExpressionAtlas" id="B9GFG6">
    <property type="expression patterns" value="baseline and differential"/>
</dbReference>
<dbReference type="GO" id="GO:0005886">
    <property type="term" value="C:plasma membrane"/>
    <property type="evidence" value="ECO:0007669"/>
    <property type="project" value="UniProtKB-SubCell"/>
</dbReference>
<dbReference type="InterPro" id="IPR006459">
    <property type="entry name" value="CASP/CASPL"/>
</dbReference>
<dbReference type="InterPro" id="IPR006702">
    <property type="entry name" value="CASP_dom"/>
</dbReference>
<dbReference type="NCBIfam" id="TIGR01569">
    <property type="entry name" value="A_tha_TIGR01569"/>
    <property type="match status" value="1"/>
</dbReference>
<dbReference type="PANTHER" id="PTHR33573:SF47">
    <property type="entry name" value="CASP-LIKE PROTEIN 1U1"/>
    <property type="match status" value="1"/>
</dbReference>
<dbReference type="PANTHER" id="PTHR33573">
    <property type="entry name" value="CASP-LIKE PROTEIN 4A4"/>
    <property type="match status" value="1"/>
</dbReference>
<dbReference type="Pfam" id="PF04535">
    <property type="entry name" value="CASP_dom"/>
    <property type="match status" value="1"/>
</dbReference>
<feature type="chain" id="PRO_0000412046" description="CASP-like protein 1F3">
    <location>
        <begin position="1"/>
        <end position="193"/>
    </location>
</feature>
<feature type="topological domain" description="Cytoplasmic" evidence="2">
    <location>
        <begin position="1"/>
        <end position="35"/>
    </location>
</feature>
<feature type="transmembrane region" description="Helical" evidence="2">
    <location>
        <begin position="36"/>
        <end position="56"/>
    </location>
</feature>
<feature type="topological domain" description="Extracellular" evidence="2">
    <location>
        <begin position="57"/>
        <end position="78"/>
    </location>
</feature>
<feature type="transmembrane region" description="Helical" evidence="2">
    <location>
        <begin position="79"/>
        <end position="99"/>
    </location>
</feature>
<feature type="topological domain" description="Cytoplasmic" evidence="2">
    <location>
        <begin position="100"/>
        <end position="118"/>
    </location>
</feature>
<feature type="transmembrane region" description="Helical" evidence="2">
    <location>
        <begin position="119"/>
        <end position="139"/>
    </location>
</feature>
<feature type="topological domain" description="Extracellular" evidence="2">
    <location>
        <begin position="140"/>
        <end position="161"/>
    </location>
</feature>
<feature type="transmembrane region" description="Helical" evidence="2">
    <location>
        <begin position="162"/>
        <end position="182"/>
    </location>
</feature>
<feature type="topological domain" description="Cytoplasmic" evidence="2">
    <location>
        <begin position="183"/>
        <end position="193"/>
    </location>
</feature>
<feature type="region of interest" description="Disordered" evidence="3">
    <location>
        <begin position="1"/>
        <end position="25"/>
    </location>
</feature>
<sequence length="193" mass="21346">MASPQNTSQKRFFQANSPGGMPTASQSQRSRILAQITLRFLAIAFTVTAIPVMITAKEPVSLLGLAITPSYKQSSAMKFLLGVNATVFAFTALSMLFVWPLRRSGSKPINYFFLHLHDMVMTLLLISGCAAATAVGYLSQYGQPETYWSPICDIVKKFCHQMLISTVLSYLAFFCYLALNILSVHKLMSRATE</sequence>
<gene>
    <name type="ORF">POPTRDRAFT_752786</name>
</gene>
<evidence type="ECO:0000250" key="1"/>
<evidence type="ECO:0000255" key="2"/>
<evidence type="ECO:0000256" key="3">
    <source>
        <dbReference type="SAM" id="MobiDB-lite"/>
    </source>
</evidence>
<evidence type="ECO:0000305" key="4"/>
<comment type="subunit">
    <text evidence="1">Homodimer and heterodimers.</text>
</comment>
<comment type="subcellular location">
    <subcellularLocation>
        <location evidence="1">Cell membrane</location>
        <topology evidence="1">Multi-pass membrane protein</topology>
    </subcellularLocation>
</comment>
<comment type="similarity">
    <text evidence="4">Belongs to the Casparian strip membrane proteins (CASP) family.</text>
</comment>
<protein>
    <recommendedName>
        <fullName>CASP-like protein 1F3</fullName>
        <shortName>PtCASPL1F3</shortName>
    </recommendedName>
</protein>
<name>CSPLF_POPTR</name>